<comment type="function">
    <text evidence="1">Catalyzes the condensation of the acetyl group of acetyl-CoA with 3-methyl-2-oxobutanoate (2-ketoisovalerate) to form 3-carboxy-3-hydroxy-4-methylpentanoate (2-isopropylmalate).</text>
</comment>
<comment type="catalytic activity">
    <reaction evidence="1">
        <text>3-methyl-2-oxobutanoate + acetyl-CoA + H2O = (2S)-2-isopropylmalate + CoA + H(+)</text>
        <dbReference type="Rhea" id="RHEA:21524"/>
        <dbReference type="ChEBI" id="CHEBI:1178"/>
        <dbReference type="ChEBI" id="CHEBI:11851"/>
        <dbReference type="ChEBI" id="CHEBI:15377"/>
        <dbReference type="ChEBI" id="CHEBI:15378"/>
        <dbReference type="ChEBI" id="CHEBI:57287"/>
        <dbReference type="ChEBI" id="CHEBI:57288"/>
        <dbReference type="EC" id="2.3.3.13"/>
    </reaction>
</comment>
<comment type="cofactor">
    <cofactor evidence="1">
        <name>Mn(2+)</name>
        <dbReference type="ChEBI" id="CHEBI:29035"/>
    </cofactor>
</comment>
<comment type="pathway">
    <text evidence="1">Amino-acid biosynthesis; L-leucine biosynthesis; L-leucine from 3-methyl-2-oxobutanoate: step 1/4.</text>
</comment>
<comment type="subunit">
    <text evidence="1">Homodimer.</text>
</comment>
<comment type="subcellular location">
    <subcellularLocation>
        <location evidence="1">Cytoplasm</location>
    </subcellularLocation>
</comment>
<comment type="similarity">
    <text evidence="1">Belongs to the alpha-IPM synthase/homocitrate synthase family. LeuA type 1 subfamily.</text>
</comment>
<sequence length="515" mass="56560">MSRIKIFDTTLRDGEQSPGVNLNKAEKLEIAKQLEKYGVDRMEAGFPASSKGDFESVKQIAETIKSSSVIALARAVKSDIDIAYEALKGAEKPAIHIFLATSPIHMTYKLKKSPEQVIETAVNMVTYAKERFDEIEWSAEDATRSDWNFLAQIIEKVIEAGATVINLPDTVGYTTPEEYGKLFRFIKETVPNINQVALSCHCHNDLGMAVANSIAAVENGATQVEGTINGIGERAGNAALEEVAVALKIRSDYYPFETGLILKETKRTSDLVAKLTGMYVQANKAVIGRNAFSHESGIHQDGVLKNTETYEIITPEMVGVSSNTLFLGKHSGRHAFKDKLKEFGVELSEEELKTAFEQFKLLTDQKKEVTDDDLYTILMDIKTDSTVVDKYKLIQFGVSYDTAATPKANVILESPNGSLIEATQQGNGSVEALYKTINYLIAENITLVDYQINSVGGGKDALAESHVQIIINGETINGRGSAQDVLQASAVAFIQAVNRYYVQKKANLTRLVYES</sequence>
<gene>
    <name evidence="1" type="primary">leuA</name>
    <name type="ordered locus">OB2620</name>
</gene>
<organism>
    <name type="scientific">Oceanobacillus iheyensis (strain DSM 14371 / CIP 107618 / JCM 11309 / KCTC 3954 / HTE831)</name>
    <dbReference type="NCBI Taxonomy" id="221109"/>
    <lineage>
        <taxon>Bacteria</taxon>
        <taxon>Bacillati</taxon>
        <taxon>Bacillota</taxon>
        <taxon>Bacilli</taxon>
        <taxon>Bacillales</taxon>
        <taxon>Bacillaceae</taxon>
        <taxon>Oceanobacillus</taxon>
    </lineage>
</organism>
<reference key="1">
    <citation type="journal article" date="2002" name="Nucleic Acids Res.">
        <title>Genome sequence of Oceanobacillus iheyensis isolated from the Iheya Ridge and its unexpected adaptive capabilities to extreme environments.</title>
        <authorList>
            <person name="Takami H."/>
            <person name="Takaki Y."/>
            <person name="Uchiyama I."/>
        </authorList>
    </citation>
    <scope>NUCLEOTIDE SEQUENCE [LARGE SCALE GENOMIC DNA]</scope>
    <source>
        <strain>DSM 14371 / CIP 107618 / JCM 11309 / KCTC 3954 / HTE831</strain>
    </source>
</reference>
<keyword id="KW-0028">Amino-acid biosynthesis</keyword>
<keyword id="KW-0100">Branched-chain amino acid biosynthesis</keyword>
<keyword id="KW-0963">Cytoplasm</keyword>
<keyword id="KW-0432">Leucine biosynthesis</keyword>
<keyword id="KW-0464">Manganese</keyword>
<keyword id="KW-0479">Metal-binding</keyword>
<keyword id="KW-1185">Reference proteome</keyword>
<keyword id="KW-0808">Transferase</keyword>
<accession>Q8EN67</accession>
<protein>
    <recommendedName>
        <fullName evidence="1">2-isopropylmalate synthase</fullName>
        <ecNumber evidence="1">2.3.3.13</ecNumber>
    </recommendedName>
    <alternativeName>
        <fullName evidence="1">Alpha-IPM synthase</fullName>
    </alternativeName>
    <alternativeName>
        <fullName evidence="1">Alpha-isopropylmalate synthase</fullName>
    </alternativeName>
</protein>
<proteinExistence type="inferred from homology"/>
<evidence type="ECO:0000255" key="1">
    <source>
        <dbReference type="HAMAP-Rule" id="MF_01025"/>
    </source>
</evidence>
<feature type="chain" id="PRO_0000140366" description="2-isopropylmalate synthase">
    <location>
        <begin position="1"/>
        <end position="515"/>
    </location>
</feature>
<feature type="domain" description="Pyruvate carboxyltransferase" evidence="1">
    <location>
        <begin position="4"/>
        <end position="266"/>
    </location>
</feature>
<feature type="region of interest" description="Regulatory domain" evidence="1">
    <location>
        <begin position="392"/>
        <end position="515"/>
    </location>
</feature>
<feature type="binding site" evidence="1">
    <location>
        <position position="13"/>
    </location>
    <ligand>
        <name>Mn(2+)</name>
        <dbReference type="ChEBI" id="CHEBI:29035"/>
    </ligand>
</feature>
<feature type="binding site" evidence="1">
    <location>
        <position position="201"/>
    </location>
    <ligand>
        <name>Mn(2+)</name>
        <dbReference type="ChEBI" id="CHEBI:29035"/>
    </ligand>
</feature>
<feature type="binding site" evidence="1">
    <location>
        <position position="203"/>
    </location>
    <ligand>
        <name>Mn(2+)</name>
        <dbReference type="ChEBI" id="CHEBI:29035"/>
    </ligand>
</feature>
<feature type="binding site" evidence="1">
    <location>
        <position position="237"/>
    </location>
    <ligand>
        <name>Mn(2+)</name>
        <dbReference type="ChEBI" id="CHEBI:29035"/>
    </ligand>
</feature>
<dbReference type="EC" id="2.3.3.13" evidence="1"/>
<dbReference type="EMBL" id="BA000028">
    <property type="protein sequence ID" value="BAC14576.1"/>
    <property type="molecule type" value="Genomic_DNA"/>
</dbReference>
<dbReference type="RefSeq" id="WP_011067013.1">
    <property type="nucleotide sequence ID" value="NC_004193.1"/>
</dbReference>
<dbReference type="SMR" id="Q8EN67"/>
<dbReference type="STRING" id="221109.gene:10734872"/>
<dbReference type="KEGG" id="oih:OB2620"/>
<dbReference type="eggNOG" id="COG0119">
    <property type="taxonomic scope" value="Bacteria"/>
</dbReference>
<dbReference type="HOGENOM" id="CLU_022158_0_1_9"/>
<dbReference type="OrthoDB" id="9804858at2"/>
<dbReference type="PhylomeDB" id="Q8EN67"/>
<dbReference type="UniPathway" id="UPA00048">
    <property type="reaction ID" value="UER00070"/>
</dbReference>
<dbReference type="Proteomes" id="UP000000822">
    <property type="component" value="Chromosome"/>
</dbReference>
<dbReference type="GO" id="GO:0005737">
    <property type="term" value="C:cytoplasm"/>
    <property type="evidence" value="ECO:0007669"/>
    <property type="project" value="UniProtKB-SubCell"/>
</dbReference>
<dbReference type="GO" id="GO:0003852">
    <property type="term" value="F:2-isopropylmalate synthase activity"/>
    <property type="evidence" value="ECO:0007669"/>
    <property type="project" value="UniProtKB-UniRule"/>
</dbReference>
<dbReference type="GO" id="GO:0003985">
    <property type="term" value="F:acetyl-CoA C-acetyltransferase activity"/>
    <property type="evidence" value="ECO:0007669"/>
    <property type="project" value="UniProtKB-UniRule"/>
</dbReference>
<dbReference type="GO" id="GO:0030145">
    <property type="term" value="F:manganese ion binding"/>
    <property type="evidence" value="ECO:0007669"/>
    <property type="project" value="UniProtKB-UniRule"/>
</dbReference>
<dbReference type="GO" id="GO:0009098">
    <property type="term" value="P:L-leucine biosynthetic process"/>
    <property type="evidence" value="ECO:0007669"/>
    <property type="project" value="UniProtKB-UniRule"/>
</dbReference>
<dbReference type="CDD" id="cd07940">
    <property type="entry name" value="DRE_TIM_IPMS"/>
    <property type="match status" value="1"/>
</dbReference>
<dbReference type="FunFam" id="1.10.238.260:FF:000001">
    <property type="entry name" value="2-isopropylmalate synthase"/>
    <property type="match status" value="1"/>
</dbReference>
<dbReference type="FunFam" id="3.20.20.70:FF:000010">
    <property type="entry name" value="2-isopropylmalate synthase"/>
    <property type="match status" value="1"/>
</dbReference>
<dbReference type="Gene3D" id="1.10.238.260">
    <property type="match status" value="1"/>
</dbReference>
<dbReference type="Gene3D" id="3.30.160.270">
    <property type="match status" value="1"/>
</dbReference>
<dbReference type="Gene3D" id="3.20.20.70">
    <property type="entry name" value="Aldolase class I"/>
    <property type="match status" value="1"/>
</dbReference>
<dbReference type="HAMAP" id="MF_01025">
    <property type="entry name" value="LeuA_type1"/>
    <property type="match status" value="1"/>
</dbReference>
<dbReference type="InterPro" id="IPR050073">
    <property type="entry name" value="2-IPM_HCS-like"/>
</dbReference>
<dbReference type="InterPro" id="IPR013709">
    <property type="entry name" value="2-isopropylmalate_synth_dimer"/>
</dbReference>
<dbReference type="InterPro" id="IPR002034">
    <property type="entry name" value="AIPM/Hcit_synth_CS"/>
</dbReference>
<dbReference type="InterPro" id="IPR013785">
    <property type="entry name" value="Aldolase_TIM"/>
</dbReference>
<dbReference type="InterPro" id="IPR054691">
    <property type="entry name" value="LeuA/HCS_post-cat"/>
</dbReference>
<dbReference type="InterPro" id="IPR036230">
    <property type="entry name" value="LeuA_allosteric_dom_sf"/>
</dbReference>
<dbReference type="InterPro" id="IPR005671">
    <property type="entry name" value="LeuA_bact_synth"/>
</dbReference>
<dbReference type="InterPro" id="IPR000891">
    <property type="entry name" value="PYR_CT"/>
</dbReference>
<dbReference type="NCBIfam" id="TIGR00973">
    <property type="entry name" value="leuA_bact"/>
    <property type="match status" value="1"/>
</dbReference>
<dbReference type="NCBIfam" id="NF002086">
    <property type="entry name" value="PRK00915.1-3"/>
    <property type="match status" value="1"/>
</dbReference>
<dbReference type="NCBIfam" id="NF002088">
    <property type="entry name" value="PRK00915.1-5"/>
    <property type="match status" value="1"/>
</dbReference>
<dbReference type="PANTHER" id="PTHR10277:SF9">
    <property type="entry name" value="2-ISOPROPYLMALATE SYNTHASE 1, CHLOROPLASTIC-RELATED"/>
    <property type="match status" value="1"/>
</dbReference>
<dbReference type="PANTHER" id="PTHR10277">
    <property type="entry name" value="HOMOCITRATE SYNTHASE-RELATED"/>
    <property type="match status" value="1"/>
</dbReference>
<dbReference type="Pfam" id="PF22617">
    <property type="entry name" value="HCS_D2"/>
    <property type="match status" value="1"/>
</dbReference>
<dbReference type="Pfam" id="PF00682">
    <property type="entry name" value="HMGL-like"/>
    <property type="match status" value="1"/>
</dbReference>
<dbReference type="Pfam" id="PF08502">
    <property type="entry name" value="LeuA_dimer"/>
    <property type="match status" value="1"/>
</dbReference>
<dbReference type="SMART" id="SM00917">
    <property type="entry name" value="LeuA_dimer"/>
    <property type="match status" value="1"/>
</dbReference>
<dbReference type="SUPFAM" id="SSF110921">
    <property type="entry name" value="2-isopropylmalate synthase LeuA, allosteric (dimerisation) domain"/>
    <property type="match status" value="1"/>
</dbReference>
<dbReference type="SUPFAM" id="SSF51569">
    <property type="entry name" value="Aldolase"/>
    <property type="match status" value="1"/>
</dbReference>
<dbReference type="PROSITE" id="PS00815">
    <property type="entry name" value="AIPM_HOMOCIT_SYNTH_1"/>
    <property type="match status" value="1"/>
</dbReference>
<dbReference type="PROSITE" id="PS00816">
    <property type="entry name" value="AIPM_HOMOCIT_SYNTH_2"/>
    <property type="match status" value="1"/>
</dbReference>
<dbReference type="PROSITE" id="PS50991">
    <property type="entry name" value="PYR_CT"/>
    <property type="match status" value="1"/>
</dbReference>
<name>LEU1_OCEIH</name>